<organism>
    <name type="scientific">Staphylococcus aureus (strain Newman)</name>
    <dbReference type="NCBI Taxonomy" id="426430"/>
    <lineage>
        <taxon>Bacteria</taxon>
        <taxon>Bacillati</taxon>
        <taxon>Bacillota</taxon>
        <taxon>Bacilli</taxon>
        <taxon>Bacillales</taxon>
        <taxon>Staphylococcaceae</taxon>
        <taxon>Staphylococcus</taxon>
    </lineage>
</organism>
<proteinExistence type="evidence at protein level"/>
<accession>O86489</accession>
<accession>A6QEL5</accession>
<feature type="signal peptide" evidence="1">
    <location>
        <begin position="1"/>
        <end position="52"/>
    </location>
</feature>
<feature type="chain" id="PRO_0000280237" description="Serine-aspartate repeat-containing protein E">
    <location>
        <begin position="53"/>
        <end position="1132"/>
    </location>
</feature>
<feature type="propeptide" id="PRO_0000280238" description="Removed by sortase" evidence="2 8">
    <location>
        <begin position="1133"/>
        <end position="1166"/>
    </location>
</feature>
<feature type="domain" description="CNA-B 1">
    <location>
        <begin position="607"/>
        <end position="719"/>
    </location>
</feature>
<feature type="domain" description="CNA-B 2">
    <location>
        <begin position="720"/>
        <end position="829"/>
    </location>
</feature>
<feature type="domain" description="CNA-B 3">
    <location>
        <begin position="830"/>
        <end position="940"/>
    </location>
</feature>
<feature type="region of interest" description="Ligand binding A region">
    <location>
        <begin position="53"/>
        <end position="606"/>
    </location>
</feature>
<feature type="region of interest" description="Disordered" evidence="3">
    <location>
        <begin position="54"/>
        <end position="230"/>
    </location>
</feature>
<feature type="region of interest" description="Disordered" evidence="3">
    <location>
        <begin position="904"/>
        <end position="1141"/>
    </location>
</feature>
<feature type="short sequence motif" description="YSIRK-G/S signaling motif" evidence="7">
    <location>
        <begin position="23"/>
        <end position="34"/>
    </location>
</feature>
<feature type="short sequence motif" description="LPXTG sorting signal" evidence="2">
    <location>
        <begin position="1129"/>
        <end position="1133"/>
    </location>
</feature>
<feature type="compositionally biased region" description="Basic and acidic residues" evidence="3">
    <location>
        <begin position="61"/>
        <end position="75"/>
    </location>
</feature>
<feature type="compositionally biased region" description="Low complexity" evidence="3">
    <location>
        <begin position="77"/>
        <end position="90"/>
    </location>
</feature>
<feature type="compositionally biased region" description="Basic and acidic residues" evidence="3">
    <location>
        <begin position="92"/>
        <end position="108"/>
    </location>
</feature>
<feature type="compositionally biased region" description="Polar residues" evidence="3">
    <location>
        <begin position="118"/>
        <end position="129"/>
    </location>
</feature>
<feature type="compositionally biased region" description="Basic and acidic residues" evidence="3">
    <location>
        <begin position="130"/>
        <end position="145"/>
    </location>
</feature>
<feature type="compositionally biased region" description="Low complexity" evidence="3">
    <location>
        <begin position="166"/>
        <end position="178"/>
    </location>
</feature>
<feature type="compositionally biased region" description="Polar residues" evidence="3">
    <location>
        <begin position="179"/>
        <end position="212"/>
    </location>
</feature>
<feature type="compositionally biased region" description="Basic and acidic residues" evidence="3">
    <location>
        <begin position="221"/>
        <end position="230"/>
    </location>
</feature>
<feature type="compositionally biased region" description="Acidic residues" evidence="3">
    <location>
        <begin position="908"/>
        <end position="918"/>
    </location>
</feature>
<feature type="compositionally biased region" description="Acidic residues" evidence="3">
    <location>
        <begin position="935"/>
        <end position="1105"/>
    </location>
</feature>
<feature type="modified residue" description="Pentaglycyl murein peptidoglycan amidated threonine" evidence="2">
    <location>
        <position position="1132"/>
    </location>
</feature>
<gene>
    <name type="primary">sdrE</name>
    <name type="ordered locus">NWMN_0525</name>
</gene>
<sequence>MINRDNKKAITKKGMISNRLNKFSIRKYTVGTASILVGTTLIFGLGNQEAKAAENTSTENAKQDDATTSDNKEVVSETENNSTTENNSTNPIKKETNTDSQPEAKKESTSSSTQKQQNNVTATTETKPQNIEKENVKPSTDKTATEDTSVILEEKKAPNNTNNDVTTKPSTSEPSTSEIQTKPTTPQESTNIENSQPQPTPSKVDNQVTDATNPKEPVNVSKEELKNNPEKLKELVRNDSNTDHSTKPVATAPTSVAPKRVNAKMRFAVAQPAAVASNNVNDLIKVTKQTIKVGDGKDNVAAAHDGKDIEYDTEFTIDNKVKKGDTMTINYDKNVIPSDLTDKNDPIDITDPSGEVIAKGTFDKATKQITYTFTDYVDKYEDIKSRLTLYSYIDKKTVPNETSLNLTFATAGKETSQNVTVDYQDPMVHGDSNIQSIFTKLDEDKQTIEQQIYVNPLKKSATNTKVDIAGSQVDDYGNIKLGNGSTIIDQNTEIKVYKVNSDQQLPQSNRIYDFSQYEDVTSQFDNKKSFSNNVATLDFGDINSAYIIKVVSKYTPTSDGELDIAQGTSMRTTDKYGYYNYAGYSNFIVTSNDTGGGDGTVKPEEKLYKIGDYVWEDVDKDGVQGTDSKEKPMANVLVTLTYPDGTTKSVRTDANGHYEFGGLKDGETYTVKFETPTGYLPTKVNGTTDGEKDSNGSSVTVKINGKDDMSLDTGFYKEPKYNLGDYVWEDTNKDGIQDANEPGIKDVKVTLKDSTGKVIGTTTTDASGKYKFTDLDNGNYTVEFETPAGYTPTVKNTTADDKDSNGLTTTGVIKDADNMTLDRGFYKTPKYSLGDYVWYDSNKDGKQDSTEKGIKDVTVTLQNEKGEVIGTTKTDENGKYRFDNLDSGKYKVIFEKPAGLTQTVTNTTEDDKDADGGEVDVTITDHDDFTLDNGYFEEDTSDSDSDSDSDSDSDSDSDSDSDSDSDSDSDSDSDSDSDSDSDSDSDSDSDSDSDSDSDSDSDSDSDSDSDSDSDSDSDSDSDSDSDSDSDSDSDSDSDSDSDSDSDSDSDSDSDSDSDSDSDSDSDSDSDSDSDSDSDSDSDSDSDSDSDSDSDSDSDSDSDSDSDAGKHTPVKPMSTTKDHHNKAKALPETGSENNGSNNATLFGGLFAALGSLLLFGRRKKQNK</sequence>
<keyword id="KW-0106">Calcium</keyword>
<keyword id="KW-0134">Cell wall</keyword>
<keyword id="KW-0572">Peptidoglycan-anchor</keyword>
<keyword id="KW-0677">Repeat</keyword>
<keyword id="KW-0964">Secreted</keyword>
<keyword id="KW-0732">Signal</keyword>
<keyword id="KW-0843">Virulence</keyword>
<evidence type="ECO:0000255" key="1"/>
<evidence type="ECO:0000255" key="2">
    <source>
        <dbReference type="PROSITE-ProRule" id="PRU00477"/>
    </source>
</evidence>
<evidence type="ECO:0000256" key="3">
    <source>
        <dbReference type="SAM" id="MobiDB-lite"/>
    </source>
</evidence>
<evidence type="ECO:0000269" key="4">
    <source>
    </source>
</evidence>
<evidence type="ECO:0000269" key="5">
    <source>
    </source>
</evidence>
<evidence type="ECO:0000269" key="6">
    <source>
    </source>
</evidence>
<evidence type="ECO:0000305" key="7"/>
<evidence type="ECO:0000305" key="8">
    <source>
    </source>
</evidence>
<dbReference type="EMBL" id="AJ005647">
    <property type="protein sequence ID" value="CAA06652.1"/>
    <property type="molecule type" value="Genomic_DNA"/>
</dbReference>
<dbReference type="EMBL" id="AP009351">
    <property type="protein sequence ID" value="BAF66797.1"/>
    <property type="molecule type" value="Genomic_DNA"/>
</dbReference>
<dbReference type="PIR" id="T28680">
    <property type="entry name" value="T28680"/>
</dbReference>
<dbReference type="RefSeq" id="WP_000610306.1">
    <property type="nucleotide sequence ID" value="NZ_JBBIAE010000002.1"/>
</dbReference>
<dbReference type="SMR" id="O86489"/>
<dbReference type="KEGG" id="sae:NWMN_0525"/>
<dbReference type="HOGENOM" id="CLU_004137_1_1_9"/>
<dbReference type="PRO" id="PR:O86489"/>
<dbReference type="Proteomes" id="UP000006386">
    <property type="component" value="Chromosome"/>
</dbReference>
<dbReference type="GO" id="GO:0005576">
    <property type="term" value="C:extracellular region"/>
    <property type="evidence" value="ECO:0007669"/>
    <property type="project" value="UniProtKB-KW"/>
</dbReference>
<dbReference type="GO" id="GO:0007155">
    <property type="term" value="P:cell adhesion"/>
    <property type="evidence" value="ECO:0007669"/>
    <property type="project" value="InterPro"/>
</dbReference>
<dbReference type="Gene3D" id="2.60.40.1280">
    <property type="match status" value="1"/>
</dbReference>
<dbReference type="Gene3D" id="2.60.40.1290">
    <property type="match status" value="1"/>
</dbReference>
<dbReference type="Gene3D" id="2.60.40.10">
    <property type="entry name" value="Immunoglobulins"/>
    <property type="match status" value="3"/>
</dbReference>
<dbReference type="InterPro" id="IPR011266">
    <property type="entry name" value="Adhesin_Fg-bd_dom_2"/>
</dbReference>
<dbReference type="InterPro" id="IPR008966">
    <property type="entry name" value="Adhesion_dom_sf"/>
</dbReference>
<dbReference type="InterPro" id="IPR011252">
    <property type="entry name" value="Fibrogen-bd_dom1"/>
</dbReference>
<dbReference type="InterPro" id="IPR013783">
    <property type="entry name" value="Ig-like_fold"/>
</dbReference>
<dbReference type="InterPro" id="IPR019931">
    <property type="entry name" value="LPXTG_anchor"/>
</dbReference>
<dbReference type="InterPro" id="IPR050972">
    <property type="entry name" value="SDr-like"/>
</dbReference>
<dbReference type="InterPro" id="IPR033764">
    <property type="entry name" value="Sdr_B"/>
</dbReference>
<dbReference type="InterPro" id="IPR041171">
    <property type="entry name" value="SDR_Ig"/>
</dbReference>
<dbReference type="InterPro" id="IPR005877">
    <property type="entry name" value="YSIRK_signal_dom"/>
</dbReference>
<dbReference type="NCBIfam" id="TIGR01167">
    <property type="entry name" value="LPXTG_anchor"/>
    <property type="match status" value="1"/>
</dbReference>
<dbReference type="NCBIfam" id="TIGR01168">
    <property type="entry name" value="YSIRK_signal"/>
    <property type="match status" value="1"/>
</dbReference>
<dbReference type="PANTHER" id="PTHR34403">
    <property type="entry name" value="TOL-PAL SYSTEM PROTEIN TOLA"/>
    <property type="match status" value="1"/>
</dbReference>
<dbReference type="PANTHER" id="PTHR34403:SF8">
    <property type="entry name" value="TOL-PAL SYSTEM PROTEIN TOLA"/>
    <property type="match status" value="1"/>
</dbReference>
<dbReference type="Pfam" id="PF17961">
    <property type="entry name" value="Big_8"/>
    <property type="match status" value="1"/>
</dbReference>
<dbReference type="Pfam" id="PF00746">
    <property type="entry name" value="Gram_pos_anchor"/>
    <property type="match status" value="1"/>
</dbReference>
<dbReference type="Pfam" id="PF17210">
    <property type="entry name" value="SdrD_B"/>
    <property type="match status" value="3"/>
</dbReference>
<dbReference type="Pfam" id="PF10425">
    <property type="entry name" value="SdrG_C_C"/>
    <property type="match status" value="1"/>
</dbReference>
<dbReference type="Pfam" id="PF04650">
    <property type="entry name" value="YSIRK_signal"/>
    <property type="match status" value="1"/>
</dbReference>
<dbReference type="SUPFAM" id="SSF49401">
    <property type="entry name" value="Bacterial adhesins"/>
    <property type="match status" value="2"/>
</dbReference>
<dbReference type="SUPFAM" id="SSF117074">
    <property type="entry name" value="Hypothetical protein PA1324"/>
    <property type="match status" value="3"/>
</dbReference>
<dbReference type="PROSITE" id="PS50847">
    <property type="entry name" value="GRAM_POS_ANCHORING"/>
    <property type="match status" value="1"/>
</dbReference>
<reference key="1">
    <citation type="journal article" date="1998" name="Microbiology">
        <title>Three new members of the serine-aspartate repeat protein multigene family of Staphylococcus aureus.</title>
        <authorList>
            <person name="Josefsson E."/>
            <person name="McCrea K.W."/>
            <person name="Eidhin D.N."/>
            <person name="O'Connell D."/>
            <person name="Cox J.A."/>
            <person name="Hoeoek M."/>
            <person name="Foster T.J."/>
        </authorList>
    </citation>
    <scope>NUCLEOTIDE SEQUENCE [GENOMIC DNA]</scope>
</reference>
<reference key="2">
    <citation type="journal article" date="2008" name="J. Bacteriol.">
        <title>Genome sequence of Staphylococcus aureus strain Newman and comparative analysis of staphylococcal genomes: polymorphism and evolution of two major pathogenicity islands.</title>
        <authorList>
            <person name="Baba T."/>
            <person name="Bae T."/>
            <person name="Schneewind O."/>
            <person name="Takeuchi F."/>
            <person name="Hiramatsu K."/>
        </authorList>
    </citation>
    <scope>NUCLEOTIDE SEQUENCE [LARGE SCALE GENOMIC DNA]</scope>
    <source>
        <strain>Newman</strain>
    </source>
</reference>
<reference key="3">
    <citation type="journal article" date="2002" name="Mol. Microbiol.">
        <title>Multiple mechanisms for the activation of human platelet aggregation by Staphylococcus aureus: roles for the clumping factors clfA and clfB, the serine-aspartate repeat protein sdrE and protein A.</title>
        <authorList>
            <person name="O'Brien L.M."/>
            <person name="Kerrigan S.W."/>
            <person name="Kaw G."/>
            <person name="Hogan M."/>
            <person name="Penades J."/>
            <person name="Litt D."/>
            <person name="Fitzgerald D.J."/>
            <person name="Foster T.J."/>
            <person name="Cox D."/>
        </authorList>
    </citation>
    <scope>FUNCTION</scope>
    <scope>INDUCTION</scope>
</reference>
<reference key="4">
    <citation type="journal article" date="2002" name="Proc. Natl. Acad. Sci. U.S.A.">
        <title>An iron-regulated sortase anchors a class of surface protein during Staphylococcus aureus pathogenesis.</title>
        <authorList>
            <person name="Mazmanian S.K."/>
            <person name="Ton-That H."/>
            <person name="Su K."/>
            <person name="Schneewind O."/>
        </authorList>
    </citation>
    <scope>SUBCELLULAR LOCATION</scope>
    <scope>PROCESSING BY SORTASE A</scope>
    <source>
        <strain>Newman</strain>
    </source>
</reference>
<reference key="5">
    <citation type="journal article" date="2006" name="Proc. Natl. Acad. Sci. U.S.A.">
        <title>Vaccine assembly from surface proteins of Staphylococcus aureus.</title>
        <authorList>
            <person name="Stranger-Jones Y.K."/>
            <person name="Bae T."/>
            <person name="Schneewind O."/>
        </authorList>
    </citation>
    <scope>POTENTIAL USE AS A VACCINE</scope>
</reference>
<reference key="6">
    <citation type="journal article" date="2012" name="PLoS ONE">
        <title>Staphylococcus aureus surface protein SdrE binds complement regulator factor H as an immune evasion tactic.</title>
        <authorList>
            <person name="Sharp J.A."/>
            <person name="Echague C.G."/>
            <person name="Hair P.S."/>
            <person name="Ward M.D."/>
            <person name="Nyalwidhe J.O."/>
            <person name="Geoghegan J.A."/>
            <person name="Foster T.J."/>
            <person name="Cunnion K.M."/>
        </authorList>
    </citation>
    <scope>FUNCTION</scope>
    <scope>INTERACTION WITH HOST CFAH</scope>
</reference>
<reference key="7">
    <citation type="journal article" date="2013" name="Results Immunol.">
        <title>Complement regulator C4BP binds to Staphylococcus aureus surface proteins SdrE and Bbp inhibiting bacterial opsonization and killing.</title>
        <authorList>
            <person name="Hair P.S."/>
            <person name="Foley C.K."/>
            <person name="Krishna N.K."/>
            <person name="Nyalwidhe J.O."/>
            <person name="Geoghegan J.A."/>
            <person name="Foster T.J."/>
            <person name="Cunnion K.M."/>
        </authorList>
    </citation>
    <scope>FUNCTION</scope>
    <scope>INTERACTION WITH HOST C4BPA</scope>
</reference>
<protein>
    <recommendedName>
        <fullName>Serine-aspartate repeat-containing protein E</fullName>
    </recommendedName>
</protein>
<name>SDRE_STAAE</name>
<comment type="function">
    <text evidence="5 6">Cell surface-associated calcium-binding protein which plays an important role in adhesion and pathogenesis. Contributes to the resistance to killing by innate immune components in blood and thus attenuates bacterial clearance by interacting with host complement factor H/CFAH and modulating its activity (PubMed:22675461). Inhibits also bacterial opsonization and killing by interacting with host complement regulator C4BPA and thus inhibiting classical complement pathway activation (PubMed:24600566).</text>
</comment>
<comment type="subunit">
    <text evidence="5 6">Interacts with host complement factor H/CFAH (via C-terminus) (PubMed:22675461). Interacts with host complement regulator C4BPA (PubMed:24600566).</text>
</comment>
<comment type="subcellular location">
    <subcellularLocation>
        <location evidence="2 8">Secreted</location>
        <location evidence="2 8">Cell wall</location>
        <topology evidence="2 8">Peptidoglycan-anchor</topology>
    </subcellularLocation>
    <text evidence="8">Anchored to the cell wall by sortase A.</text>
</comment>
<comment type="induction">
    <text evidence="4">Expressed at both exponential and stationary phases.</text>
</comment>
<comment type="biotechnology">
    <text>A combined vaccine containing IsdA, IsdB, SdrD and SdrE afforded significant protection in mice against a lethal challenge with S.aureus Newman or any of the clinical isolates NRS252, N315, NRS248, USA100 and USA400. The immune response elicited by the combined vaccine is greater than the one elicited by its individual components.</text>
</comment>
<comment type="similarity">
    <text evidence="7">Belongs to the serine-aspartate repeat-containing protein (SDr) family.</text>
</comment>